<comment type="function">
    <text evidence="1">Core subunit of the mitochondrial membrane respiratory chain NADH dehydrogenase (Complex I) that is believed to belong to the minimal assembly required for catalysis. Complex I functions in the transfer of electrons from NADH to the respiratory chain. The immediate electron acceptor for the enzyme is believed to be ubiquinone (By similarity).</text>
</comment>
<comment type="catalytic activity">
    <reaction>
        <text>a ubiquinone + NADH + 5 H(+)(in) = a ubiquinol + NAD(+) + 4 H(+)(out)</text>
        <dbReference type="Rhea" id="RHEA:29091"/>
        <dbReference type="Rhea" id="RHEA-COMP:9565"/>
        <dbReference type="Rhea" id="RHEA-COMP:9566"/>
        <dbReference type="ChEBI" id="CHEBI:15378"/>
        <dbReference type="ChEBI" id="CHEBI:16389"/>
        <dbReference type="ChEBI" id="CHEBI:17976"/>
        <dbReference type="ChEBI" id="CHEBI:57540"/>
        <dbReference type="ChEBI" id="CHEBI:57945"/>
        <dbReference type="EC" id="7.1.1.2"/>
    </reaction>
</comment>
<comment type="subcellular location">
    <subcellularLocation>
        <location evidence="1">Mitochondrion membrane</location>
        <topology evidence="1">Multi-pass membrane protein</topology>
    </subcellularLocation>
</comment>
<comment type="similarity">
    <text evidence="3">Belongs to the complex I subunit 4L family.</text>
</comment>
<reference key="1">
    <citation type="journal article" date="2002" name="Mol. Biol. Evol.">
        <title>Hyaloraphidium curvatum: a linear mitochondrial genome, tRNA editing, and an evolutionary link to lower fungi.</title>
        <authorList>
            <person name="Forget L."/>
            <person name="Ustinova J."/>
            <person name="Wang Z."/>
            <person name="Huss V.A.R."/>
            <person name="Lang B.F."/>
        </authorList>
    </citation>
    <scope>NUCLEOTIDE SEQUENCE [GENOMIC DNA]</scope>
</reference>
<geneLocation type="mitochondrion"/>
<accession>Q94ZI2</accession>
<evidence type="ECO:0000250" key="1"/>
<evidence type="ECO:0000255" key="2"/>
<evidence type="ECO:0000305" key="3"/>
<gene>
    <name type="primary">ND4L</name>
    <name type="synonym">NAD4L</name>
</gene>
<name>NU4LM_SCHCO</name>
<feature type="chain" id="PRO_0000118488" description="NADH-ubiquinone oxidoreductase chain 4L">
    <location>
        <begin position="1"/>
        <end position="88"/>
    </location>
</feature>
<feature type="transmembrane region" description="Helical" evidence="2">
    <location>
        <begin position="1"/>
        <end position="21"/>
    </location>
</feature>
<feature type="transmembrane region" description="Helical" evidence="2">
    <location>
        <begin position="22"/>
        <end position="42"/>
    </location>
</feature>
<feature type="transmembrane region" description="Helical" evidence="2">
    <location>
        <begin position="55"/>
        <end position="75"/>
    </location>
</feature>
<sequence length="88" mass="9647">MNLSLLLFLIGILGFILNRKNIILMIIAIEIMLLAITLLVLMSSVSFDDIAGQTFSIYIISIAGAESVIGLSILVAYYRLRGTISLRT</sequence>
<dbReference type="EC" id="7.1.1.2"/>
<dbReference type="EMBL" id="AF402141">
    <property type="protein sequence ID" value="AAK83415.1"/>
    <property type="molecule type" value="Genomic_DNA"/>
</dbReference>
<dbReference type="RefSeq" id="NP_150131.1">
    <property type="nucleotide sequence ID" value="NC_003049.1"/>
</dbReference>
<dbReference type="SMR" id="Q94ZI2"/>
<dbReference type="GeneID" id="803579"/>
<dbReference type="GO" id="GO:0031966">
    <property type="term" value="C:mitochondrial membrane"/>
    <property type="evidence" value="ECO:0007669"/>
    <property type="project" value="UniProtKB-SubCell"/>
</dbReference>
<dbReference type="GO" id="GO:0030964">
    <property type="term" value="C:NADH dehydrogenase complex"/>
    <property type="evidence" value="ECO:0007669"/>
    <property type="project" value="TreeGrafter"/>
</dbReference>
<dbReference type="GO" id="GO:0008137">
    <property type="term" value="F:NADH dehydrogenase (ubiquinone) activity"/>
    <property type="evidence" value="ECO:0007669"/>
    <property type="project" value="UniProtKB-EC"/>
</dbReference>
<dbReference type="GO" id="GO:0042773">
    <property type="term" value="P:ATP synthesis coupled electron transport"/>
    <property type="evidence" value="ECO:0007669"/>
    <property type="project" value="InterPro"/>
</dbReference>
<dbReference type="FunFam" id="1.10.287.3510:FF:000004">
    <property type="entry name" value="NADH-ubiquinone oxidoreductase chain 4L"/>
    <property type="match status" value="1"/>
</dbReference>
<dbReference type="Gene3D" id="1.10.287.3510">
    <property type="match status" value="1"/>
</dbReference>
<dbReference type="InterPro" id="IPR001133">
    <property type="entry name" value="NADH_UbQ_OxRdtase_chain4L/K"/>
</dbReference>
<dbReference type="InterPro" id="IPR039428">
    <property type="entry name" value="NUOK/Mnh_C1-like"/>
</dbReference>
<dbReference type="NCBIfam" id="NF004320">
    <property type="entry name" value="PRK05715.1-2"/>
    <property type="match status" value="1"/>
</dbReference>
<dbReference type="PANTHER" id="PTHR11434:SF16">
    <property type="entry name" value="NADH-UBIQUINONE OXIDOREDUCTASE CHAIN 4L"/>
    <property type="match status" value="1"/>
</dbReference>
<dbReference type="PANTHER" id="PTHR11434">
    <property type="entry name" value="NADH-UBIQUINONE OXIDOREDUCTASE SUBUNIT ND4L"/>
    <property type="match status" value="1"/>
</dbReference>
<dbReference type="Pfam" id="PF00420">
    <property type="entry name" value="Oxidored_q2"/>
    <property type="match status" value="1"/>
</dbReference>
<keyword id="KW-0249">Electron transport</keyword>
<keyword id="KW-0472">Membrane</keyword>
<keyword id="KW-0496">Mitochondrion</keyword>
<keyword id="KW-0520">NAD</keyword>
<keyword id="KW-0679">Respiratory chain</keyword>
<keyword id="KW-1278">Translocase</keyword>
<keyword id="KW-0812">Transmembrane</keyword>
<keyword id="KW-1133">Transmembrane helix</keyword>
<keyword id="KW-0813">Transport</keyword>
<keyword id="KW-0830">Ubiquinone</keyword>
<proteinExistence type="inferred from homology"/>
<protein>
    <recommendedName>
        <fullName>NADH-ubiquinone oxidoreductase chain 4L</fullName>
        <ecNumber>7.1.1.2</ecNumber>
    </recommendedName>
    <alternativeName>
        <fullName>NADH dehydrogenase subunit 4L</fullName>
    </alternativeName>
</protein>
<organism>
    <name type="scientific">Schizophyllum commune</name>
    <name type="common">Split gill fungus</name>
    <dbReference type="NCBI Taxonomy" id="5334"/>
    <lineage>
        <taxon>Eukaryota</taxon>
        <taxon>Fungi</taxon>
        <taxon>Dikarya</taxon>
        <taxon>Basidiomycota</taxon>
        <taxon>Agaricomycotina</taxon>
        <taxon>Agaricomycetes</taxon>
        <taxon>Agaricomycetidae</taxon>
        <taxon>Agaricales</taxon>
        <taxon>Schizophyllaceae</taxon>
        <taxon>Schizophyllum</taxon>
    </lineage>
</organism>